<dbReference type="EMBL" id="AM933173">
    <property type="protein sequence ID" value="CAR36394.1"/>
    <property type="molecule type" value="Genomic_DNA"/>
</dbReference>
<dbReference type="RefSeq" id="WP_000467098.1">
    <property type="nucleotide sequence ID" value="NC_011274.1"/>
</dbReference>
<dbReference type="SMR" id="B5R609"/>
<dbReference type="KEGG" id="seg:SG0495"/>
<dbReference type="HOGENOM" id="CLU_140930_0_0_6"/>
<dbReference type="Proteomes" id="UP000008321">
    <property type="component" value="Chromosome"/>
</dbReference>
<dbReference type="GO" id="GO:0043590">
    <property type="term" value="C:bacterial nucleoid"/>
    <property type="evidence" value="ECO:0007669"/>
    <property type="project" value="UniProtKB-UniRule"/>
</dbReference>
<dbReference type="GO" id="GO:0005829">
    <property type="term" value="C:cytosol"/>
    <property type="evidence" value="ECO:0007669"/>
    <property type="project" value="TreeGrafter"/>
</dbReference>
<dbReference type="GO" id="GO:0003677">
    <property type="term" value="F:DNA binding"/>
    <property type="evidence" value="ECO:0007669"/>
    <property type="project" value="UniProtKB-UniRule"/>
</dbReference>
<dbReference type="FunFam" id="3.30.1310.10:FF:000001">
    <property type="entry name" value="Nucleoid-associated protein YbaB"/>
    <property type="match status" value="1"/>
</dbReference>
<dbReference type="Gene3D" id="3.30.1310.10">
    <property type="entry name" value="Nucleoid-associated protein YbaB-like domain"/>
    <property type="match status" value="1"/>
</dbReference>
<dbReference type="HAMAP" id="MF_00274">
    <property type="entry name" value="DNA_YbaB_EbfC"/>
    <property type="match status" value="1"/>
</dbReference>
<dbReference type="InterPro" id="IPR036894">
    <property type="entry name" value="YbaB-like_sf"/>
</dbReference>
<dbReference type="InterPro" id="IPR004401">
    <property type="entry name" value="YbaB/EbfC"/>
</dbReference>
<dbReference type="NCBIfam" id="TIGR00103">
    <property type="entry name" value="DNA_YbaB_EbfC"/>
    <property type="match status" value="1"/>
</dbReference>
<dbReference type="PANTHER" id="PTHR33449">
    <property type="entry name" value="NUCLEOID-ASSOCIATED PROTEIN YBAB"/>
    <property type="match status" value="1"/>
</dbReference>
<dbReference type="PANTHER" id="PTHR33449:SF1">
    <property type="entry name" value="NUCLEOID-ASSOCIATED PROTEIN YBAB"/>
    <property type="match status" value="1"/>
</dbReference>
<dbReference type="Pfam" id="PF02575">
    <property type="entry name" value="YbaB_DNA_bd"/>
    <property type="match status" value="1"/>
</dbReference>
<dbReference type="PIRSF" id="PIRSF004555">
    <property type="entry name" value="UCP004555"/>
    <property type="match status" value="1"/>
</dbReference>
<dbReference type="SUPFAM" id="SSF82607">
    <property type="entry name" value="YbaB-like"/>
    <property type="match status" value="1"/>
</dbReference>
<keyword id="KW-0963">Cytoplasm</keyword>
<keyword id="KW-0238">DNA-binding</keyword>
<gene>
    <name evidence="1" type="primary">ybaB</name>
    <name type="ordered locus">SG0495</name>
</gene>
<feature type="chain" id="PRO_1000114643" description="Nucleoid-associated protein YbaB">
    <location>
        <begin position="1"/>
        <end position="109"/>
    </location>
</feature>
<name>YBAB_SALG2</name>
<comment type="function">
    <text evidence="1">Binds to DNA and alters its conformation. May be involved in regulation of gene expression, nucleoid organization and DNA protection.</text>
</comment>
<comment type="subunit">
    <text evidence="1">Homodimer.</text>
</comment>
<comment type="subcellular location">
    <subcellularLocation>
        <location evidence="1">Cytoplasm</location>
        <location evidence="1">Nucleoid</location>
    </subcellularLocation>
</comment>
<comment type="similarity">
    <text evidence="1">Belongs to the YbaB/EbfC family.</text>
</comment>
<organism>
    <name type="scientific">Salmonella gallinarum (strain 287/91 / NCTC 13346)</name>
    <dbReference type="NCBI Taxonomy" id="550538"/>
    <lineage>
        <taxon>Bacteria</taxon>
        <taxon>Pseudomonadati</taxon>
        <taxon>Pseudomonadota</taxon>
        <taxon>Gammaproteobacteria</taxon>
        <taxon>Enterobacterales</taxon>
        <taxon>Enterobacteriaceae</taxon>
        <taxon>Salmonella</taxon>
    </lineage>
</organism>
<protein>
    <recommendedName>
        <fullName evidence="1">Nucleoid-associated protein YbaB</fullName>
    </recommendedName>
</protein>
<accession>B5R609</accession>
<proteinExistence type="inferred from homology"/>
<evidence type="ECO:0000255" key="1">
    <source>
        <dbReference type="HAMAP-Rule" id="MF_00274"/>
    </source>
</evidence>
<reference key="1">
    <citation type="journal article" date="2008" name="Genome Res.">
        <title>Comparative genome analysis of Salmonella enteritidis PT4 and Salmonella gallinarum 287/91 provides insights into evolutionary and host adaptation pathways.</title>
        <authorList>
            <person name="Thomson N.R."/>
            <person name="Clayton D.J."/>
            <person name="Windhorst D."/>
            <person name="Vernikos G."/>
            <person name="Davidson S."/>
            <person name="Churcher C."/>
            <person name="Quail M.A."/>
            <person name="Stevens M."/>
            <person name="Jones M.A."/>
            <person name="Watson M."/>
            <person name="Barron A."/>
            <person name="Layton A."/>
            <person name="Pickard D."/>
            <person name="Kingsley R.A."/>
            <person name="Bignell A."/>
            <person name="Clark L."/>
            <person name="Harris B."/>
            <person name="Ormond D."/>
            <person name="Abdellah Z."/>
            <person name="Brooks K."/>
            <person name="Cherevach I."/>
            <person name="Chillingworth T."/>
            <person name="Woodward J."/>
            <person name="Norberczak H."/>
            <person name="Lord A."/>
            <person name="Arrowsmith C."/>
            <person name="Jagels K."/>
            <person name="Moule S."/>
            <person name="Mungall K."/>
            <person name="Saunders M."/>
            <person name="Whitehead S."/>
            <person name="Chabalgoity J.A."/>
            <person name="Maskell D."/>
            <person name="Humphreys T."/>
            <person name="Roberts M."/>
            <person name="Barrow P.A."/>
            <person name="Dougan G."/>
            <person name="Parkhill J."/>
        </authorList>
    </citation>
    <scope>NUCLEOTIDE SEQUENCE [LARGE SCALE GENOMIC DNA]</scope>
    <source>
        <strain>287/91 / NCTC 13346</strain>
    </source>
</reference>
<sequence>MFGKGGLGNLMKQAQQMQEKMQKMQEEIAQLEVTGESGAGLVKVTINGAHNCRRVEIDPSLLEDDKEMLEDLVAAAFNDAARRIEETQKEKMASVSSGMQLPPGFKMPF</sequence>